<protein>
    <recommendedName>
        <fullName evidence="1">Small ribosomal subunit protein uS3</fullName>
    </recommendedName>
    <alternativeName>
        <fullName evidence="2">30S ribosomal protein S3</fullName>
    </alternativeName>
</protein>
<gene>
    <name evidence="1" type="primary">rpsC</name>
    <name type="ordered locus">PBPRA0326</name>
</gene>
<comment type="function">
    <text evidence="1">Binds the lower part of the 30S subunit head. Binds mRNA in the 70S ribosome, positioning it for translation.</text>
</comment>
<comment type="subunit">
    <text evidence="1">Part of the 30S ribosomal subunit. Forms a tight complex with proteins S10 and S14.</text>
</comment>
<comment type="similarity">
    <text evidence="1">Belongs to the universal ribosomal protein uS3 family.</text>
</comment>
<feature type="chain" id="PRO_0000130169" description="Small ribosomal subunit protein uS3">
    <location>
        <begin position="1"/>
        <end position="229"/>
    </location>
</feature>
<feature type="domain" description="KH type-2" evidence="1">
    <location>
        <begin position="39"/>
        <end position="107"/>
    </location>
</feature>
<proteinExistence type="inferred from homology"/>
<dbReference type="EMBL" id="CR378663">
    <property type="protein sequence ID" value="CAG18765.1"/>
    <property type="molecule type" value="Genomic_DNA"/>
</dbReference>
<dbReference type="RefSeq" id="WP_011217132.1">
    <property type="nucleotide sequence ID" value="NC_006370.1"/>
</dbReference>
<dbReference type="SMR" id="Q6LVB0"/>
<dbReference type="STRING" id="298386.PBPRA0326"/>
<dbReference type="KEGG" id="ppr:PBPRA0326"/>
<dbReference type="eggNOG" id="COG0092">
    <property type="taxonomic scope" value="Bacteria"/>
</dbReference>
<dbReference type="HOGENOM" id="CLU_058591_0_2_6"/>
<dbReference type="Proteomes" id="UP000000593">
    <property type="component" value="Chromosome 1"/>
</dbReference>
<dbReference type="GO" id="GO:0022627">
    <property type="term" value="C:cytosolic small ribosomal subunit"/>
    <property type="evidence" value="ECO:0007669"/>
    <property type="project" value="TreeGrafter"/>
</dbReference>
<dbReference type="GO" id="GO:0003729">
    <property type="term" value="F:mRNA binding"/>
    <property type="evidence" value="ECO:0007669"/>
    <property type="project" value="UniProtKB-UniRule"/>
</dbReference>
<dbReference type="GO" id="GO:0019843">
    <property type="term" value="F:rRNA binding"/>
    <property type="evidence" value="ECO:0007669"/>
    <property type="project" value="UniProtKB-UniRule"/>
</dbReference>
<dbReference type="GO" id="GO:0003735">
    <property type="term" value="F:structural constituent of ribosome"/>
    <property type="evidence" value="ECO:0007669"/>
    <property type="project" value="InterPro"/>
</dbReference>
<dbReference type="GO" id="GO:0006412">
    <property type="term" value="P:translation"/>
    <property type="evidence" value="ECO:0007669"/>
    <property type="project" value="UniProtKB-UniRule"/>
</dbReference>
<dbReference type="CDD" id="cd02412">
    <property type="entry name" value="KH-II_30S_S3"/>
    <property type="match status" value="1"/>
</dbReference>
<dbReference type="FunFam" id="3.30.1140.32:FF:000001">
    <property type="entry name" value="30S ribosomal protein S3"/>
    <property type="match status" value="1"/>
</dbReference>
<dbReference type="FunFam" id="3.30.300.20:FF:000001">
    <property type="entry name" value="30S ribosomal protein S3"/>
    <property type="match status" value="1"/>
</dbReference>
<dbReference type="Gene3D" id="3.30.300.20">
    <property type="match status" value="1"/>
</dbReference>
<dbReference type="Gene3D" id="3.30.1140.32">
    <property type="entry name" value="Ribosomal protein S3, C-terminal domain"/>
    <property type="match status" value="1"/>
</dbReference>
<dbReference type="HAMAP" id="MF_01309_B">
    <property type="entry name" value="Ribosomal_uS3_B"/>
    <property type="match status" value="1"/>
</dbReference>
<dbReference type="InterPro" id="IPR004087">
    <property type="entry name" value="KH_dom"/>
</dbReference>
<dbReference type="InterPro" id="IPR015946">
    <property type="entry name" value="KH_dom-like_a/b"/>
</dbReference>
<dbReference type="InterPro" id="IPR004044">
    <property type="entry name" value="KH_dom_type_2"/>
</dbReference>
<dbReference type="InterPro" id="IPR009019">
    <property type="entry name" value="KH_sf_prok-type"/>
</dbReference>
<dbReference type="InterPro" id="IPR036419">
    <property type="entry name" value="Ribosomal_S3_C_sf"/>
</dbReference>
<dbReference type="InterPro" id="IPR005704">
    <property type="entry name" value="Ribosomal_uS3_bac-typ"/>
</dbReference>
<dbReference type="InterPro" id="IPR001351">
    <property type="entry name" value="Ribosomal_uS3_C"/>
</dbReference>
<dbReference type="InterPro" id="IPR018280">
    <property type="entry name" value="Ribosomal_uS3_CS"/>
</dbReference>
<dbReference type="NCBIfam" id="TIGR01009">
    <property type="entry name" value="rpsC_bact"/>
    <property type="match status" value="1"/>
</dbReference>
<dbReference type="PANTHER" id="PTHR11760">
    <property type="entry name" value="30S/40S RIBOSOMAL PROTEIN S3"/>
    <property type="match status" value="1"/>
</dbReference>
<dbReference type="PANTHER" id="PTHR11760:SF19">
    <property type="entry name" value="SMALL RIBOSOMAL SUBUNIT PROTEIN US3C"/>
    <property type="match status" value="1"/>
</dbReference>
<dbReference type="Pfam" id="PF07650">
    <property type="entry name" value="KH_2"/>
    <property type="match status" value="1"/>
</dbReference>
<dbReference type="Pfam" id="PF00189">
    <property type="entry name" value="Ribosomal_S3_C"/>
    <property type="match status" value="1"/>
</dbReference>
<dbReference type="SMART" id="SM00322">
    <property type="entry name" value="KH"/>
    <property type="match status" value="1"/>
</dbReference>
<dbReference type="SUPFAM" id="SSF54814">
    <property type="entry name" value="Prokaryotic type KH domain (KH-domain type II)"/>
    <property type="match status" value="1"/>
</dbReference>
<dbReference type="SUPFAM" id="SSF54821">
    <property type="entry name" value="Ribosomal protein S3 C-terminal domain"/>
    <property type="match status" value="1"/>
</dbReference>
<dbReference type="PROSITE" id="PS50823">
    <property type="entry name" value="KH_TYPE_2"/>
    <property type="match status" value="1"/>
</dbReference>
<dbReference type="PROSITE" id="PS00548">
    <property type="entry name" value="RIBOSOMAL_S3"/>
    <property type="match status" value="1"/>
</dbReference>
<sequence>MGQKVHPNGIRLGIVKPWNTTWFANSQEFADNLDGDFKVRQFLIKELKKASLSRVVIERPAKSIRVTIHTARPGIVIGKKGEDVEKLRAHISKIAGVPAQINISEVRKPELDAQLVGDSIASQLERRVMFRRAMKRAVQNAMRLGAKGIKVQVGGRLGGAEIARSEWYREGRVPLHTLRADIDYATSSAHTQYGVIGVKVWIFKGEVLGGMPIEEPKADKPKKQRKSRK</sequence>
<organism>
    <name type="scientific">Photobacterium profundum (strain SS9)</name>
    <dbReference type="NCBI Taxonomy" id="298386"/>
    <lineage>
        <taxon>Bacteria</taxon>
        <taxon>Pseudomonadati</taxon>
        <taxon>Pseudomonadota</taxon>
        <taxon>Gammaproteobacteria</taxon>
        <taxon>Vibrionales</taxon>
        <taxon>Vibrionaceae</taxon>
        <taxon>Photobacterium</taxon>
    </lineage>
</organism>
<reference key="1">
    <citation type="journal article" date="2005" name="Science">
        <title>Life at depth: Photobacterium profundum genome sequence and expression analysis.</title>
        <authorList>
            <person name="Vezzi A."/>
            <person name="Campanaro S."/>
            <person name="D'Angelo M."/>
            <person name="Simonato F."/>
            <person name="Vitulo N."/>
            <person name="Lauro F.M."/>
            <person name="Cestaro A."/>
            <person name="Malacrida G."/>
            <person name="Simionati B."/>
            <person name="Cannata N."/>
            <person name="Romualdi C."/>
            <person name="Bartlett D.H."/>
            <person name="Valle G."/>
        </authorList>
    </citation>
    <scope>NUCLEOTIDE SEQUENCE [LARGE SCALE GENOMIC DNA]</scope>
    <source>
        <strain>ATCC BAA-1253 / SS9</strain>
    </source>
</reference>
<accession>Q6LVB0</accession>
<keyword id="KW-1185">Reference proteome</keyword>
<keyword id="KW-0687">Ribonucleoprotein</keyword>
<keyword id="KW-0689">Ribosomal protein</keyword>
<keyword id="KW-0694">RNA-binding</keyword>
<keyword id="KW-0699">rRNA-binding</keyword>
<name>RS3_PHOPR</name>
<evidence type="ECO:0000255" key="1">
    <source>
        <dbReference type="HAMAP-Rule" id="MF_01309"/>
    </source>
</evidence>
<evidence type="ECO:0000305" key="2"/>